<accession>B8DFR1</accession>
<feature type="chain" id="PRO_1000199212" description="Leucine--tRNA ligase">
    <location>
        <begin position="1"/>
        <end position="803"/>
    </location>
</feature>
<feature type="short sequence motif" description="'HIGH' region">
    <location>
        <begin position="40"/>
        <end position="51"/>
    </location>
</feature>
<feature type="short sequence motif" description="'KMSKS' region">
    <location>
        <begin position="575"/>
        <end position="579"/>
    </location>
</feature>
<feature type="binding site" evidence="1">
    <location>
        <position position="578"/>
    </location>
    <ligand>
        <name>ATP</name>
        <dbReference type="ChEBI" id="CHEBI:30616"/>
    </ligand>
</feature>
<comment type="catalytic activity">
    <reaction evidence="1">
        <text>tRNA(Leu) + L-leucine + ATP = L-leucyl-tRNA(Leu) + AMP + diphosphate</text>
        <dbReference type="Rhea" id="RHEA:11688"/>
        <dbReference type="Rhea" id="RHEA-COMP:9613"/>
        <dbReference type="Rhea" id="RHEA-COMP:9622"/>
        <dbReference type="ChEBI" id="CHEBI:30616"/>
        <dbReference type="ChEBI" id="CHEBI:33019"/>
        <dbReference type="ChEBI" id="CHEBI:57427"/>
        <dbReference type="ChEBI" id="CHEBI:78442"/>
        <dbReference type="ChEBI" id="CHEBI:78494"/>
        <dbReference type="ChEBI" id="CHEBI:456215"/>
        <dbReference type="EC" id="6.1.1.4"/>
    </reaction>
</comment>
<comment type="subcellular location">
    <subcellularLocation>
        <location evidence="1">Cytoplasm</location>
    </subcellularLocation>
</comment>
<comment type="similarity">
    <text evidence="1">Belongs to the class-I aminoacyl-tRNA synthetase family.</text>
</comment>
<sequence>MTFNHKKMEPKWQQYWSEHNTFKTTEDKNKENFYALDMFPYPSGAGLHVGHPEGYTATDILSRMKRMQGKNVLHPIGWDAFGLPAEQYAIDTGNDPEEFTALNIANFTRQIKSLGFSYDWDREINTTDPEYYKWTQWIFEKLYENGLAYEAEIAVNWCPALGTVLANEEVIDGKSERGGFPVFRKPMRQWMLKITAYADRLLDDLDLVDWPENIKDMQRNWIGRSEGAEVTFKIKDSDETFNVFTTRPDTLFGATYTVFAPEHELIEKITTPEQKEAVEAYKKQVELKSELERTDLAKDKTGVFTGAYAINPINGEEVPIWIADYVLIQYGTGAIMAVPAHDERDFEFAQQFGLNIRPVLEGGDVTKEAFTGDGPHINSDFLNGLAKAEAITAAIDWLEKEGIGSRKITYRLRDWLFSRQRYWGEPIPVIHWEDGETTLVPEDELPLLLPKATEIKPSGTGESPLANLHDWVNVTDENGRKGRRETNTMPQWAGSSWYFLRYIDPKNSEAIADKEKLAEWLPVDVYIGGAEHAVLHLLYARFWHKFLYDIGVVPTKEPFQKLFNQGMILGENNEKMSKSRGNVVNPDEVVEKYGADTLRLYEMFMGPLEASIAWNENGLEGARKFLDRIWRLLVTEEGTLAEKVTTDANANLEKAYHHMVKTVTNHYENLRFNTGISQLMIFINEAYKQDTIPKQYVEGFVQLLSPIAPHLAEELWEILGHTETISYVAWPTYDETKLVEDEVEIVLQVNGKVKSKITVAKSLGKEELEKIAQEDNKMKENLEGKTIRKVIVVPGKLVNIVAN</sequence>
<organism>
    <name type="scientific">Listeria monocytogenes serotype 4a (strain HCC23)</name>
    <dbReference type="NCBI Taxonomy" id="552536"/>
    <lineage>
        <taxon>Bacteria</taxon>
        <taxon>Bacillati</taxon>
        <taxon>Bacillota</taxon>
        <taxon>Bacilli</taxon>
        <taxon>Bacillales</taxon>
        <taxon>Listeriaceae</taxon>
        <taxon>Listeria</taxon>
    </lineage>
</organism>
<evidence type="ECO:0000255" key="1">
    <source>
        <dbReference type="HAMAP-Rule" id="MF_00049"/>
    </source>
</evidence>
<reference key="1">
    <citation type="journal article" date="2011" name="J. Bacteriol.">
        <title>Genome sequence of lineage III Listeria monocytogenes strain HCC23.</title>
        <authorList>
            <person name="Steele C.L."/>
            <person name="Donaldson J.R."/>
            <person name="Paul D."/>
            <person name="Banes M.M."/>
            <person name="Arick T."/>
            <person name="Bridges S.M."/>
            <person name="Lawrence M.L."/>
        </authorList>
    </citation>
    <scope>NUCLEOTIDE SEQUENCE [LARGE SCALE GENOMIC DNA]</scope>
    <source>
        <strain>HCC23</strain>
    </source>
</reference>
<protein>
    <recommendedName>
        <fullName evidence="1">Leucine--tRNA ligase</fullName>
        <ecNumber evidence="1">6.1.1.4</ecNumber>
    </recommendedName>
    <alternativeName>
        <fullName evidence="1">Leucyl-tRNA synthetase</fullName>
        <shortName evidence="1">LeuRS</shortName>
    </alternativeName>
</protein>
<gene>
    <name evidence="1" type="primary">leuS</name>
    <name type="ordered locus">LMHCC_0905</name>
</gene>
<proteinExistence type="inferred from homology"/>
<keyword id="KW-0030">Aminoacyl-tRNA synthetase</keyword>
<keyword id="KW-0067">ATP-binding</keyword>
<keyword id="KW-0963">Cytoplasm</keyword>
<keyword id="KW-0436">Ligase</keyword>
<keyword id="KW-0547">Nucleotide-binding</keyword>
<keyword id="KW-0648">Protein biosynthesis</keyword>
<dbReference type="EC" id="6.1.1.4" evidence="1"/>
<dbReference type="EMBL" id="CP001175">
    <property type="protein sequence ID" value="ACK39254.1"/>
    <property type="molecule type" value="Genomic_DNA"/>
</dbReference>
<dbReference type="RefSeq" id="WP_012581211.1">
    <property type="nucleotide sequence ID" value="NC_011660.1"/>
</dbReference>
<dbReference type="SMR" id="B8DFR1"/>
<dbReference type="KEGG" id="lmh:LMHCC_0905"/>
<dbReference type="HOGENOM" id="CLU_004427_0_0_9"/>
<dbReference type="GO" id="GO:0005829">
    <property type="term" value="C:cytosol"/>
    <property type="evidence" value="ECO:0007669"/>
    <property type="project" value="TreeGrafter"/>
</dbReference>
<dbReference type="GO" id="GO:0002161">
    <property type="term" value="F:aminoacyl-tRNA deacylase activity"/>
    <property type="evidence" value="ECO:0007669"/>
    <property type="project" value="InterPro"/>
</dbReference>
<dbReference type="GO" id="GO:0005524">
    <property type="term" value="F:ATP binding"/>
    <property type="evidence" value="ECO:0007669"/>
    <property type="project" value="UniProtKB-UniRule"/>
</dbReference>
<dbReference type="GO" id="GO:0004823">
    <property type="term" value="F:leucine-tRNA ligase activity"/>
    <property type="evidence" value="ECO:0007669"/>
    <property type="project" value="UniProtKB-UniRule"/>
</dbReference>
<dbReference type="GO" id="GO:0006429">
    <property type="term" value="P:leucyl-tRNA aminoacylation"/>
    <property type="evidence" value="ECO:0007669"/>
    <property type="project" value="UniProtKB-UniRule"/>
</dbReference>
<dbReference type="CDD" id="cd07958">
    <property type="entry name" value="Anticodon_Ia_Leu_BEm"/>
    <property type="match status" value="1"/>
</dbReference>
<dbReference type="CDD" id="cd00812">
    <property type="entry name" value="LeuRS_core"/>
    <property type="match status" value="1"/>
</dbReference>
<dbReference type="FunFam" id="1.10.730.10:FF:000018">
    <property type="entry name" value="Leucine--tRNA ligase"/>
    <property type="match status" value="1"/>
</dbReference>
<dbReference type="FunFam" id="3.10.20.590:FF:000001">
    <property type="entry name" value="Leucine--tRNA ligase"/>
    <property type="match status" value="1"/>
</dbReference>
<dbReference type="FunFam" id="3.40.50.620:FF:000056">
    <property type="entry name" value="Leucine--tRNA ligase"/>
    <property type="match status" value="1"/>
</dbReference>
<dbReference type="FunFam" id="3.40.50.620:FF:000077">
    <property type="entry name" value="Leucine--tRNA ligase"/>
    <property type="match status" value="1"/>
</dbReference>
<dbReference type="Gene3D" id="3.10.20.590">
    <property type="match status" value="1"/>
</dbReference>
<dbReference type="Gene3D" id="3.40.50.620">
    <property type="entry name" value="HUPs"/>
    <property type="match status" value="2"/>
</dbReference>
<dbReference type="Gene3D" id="1.10.730.10">
    <property type="entry name" value="Isoleucyl-tRNA Synthetase, Domain 1"/>
    <property type="match status" value="1"/>
</dbReference>
<dbReference type="HAMAP" id="MF_00049_B">
    <property type="entry name" value="Leu_tRNA_synth_B"/>
    <property type="match status" value="1"/>
</dbReference>
<dbReference type="InterPro" id="IPR001412">
    <property type="entry name" value="aa-tRNA-synth_I_CS"/>
</dbReference>
<dbReference type="InterPro" id="IPR002300">
    <property type="entry name" value="aa-tRNA-synth_Ia"/>
</dbReference>
<dbReference type="InterPro" id="IPR002302">
    <property type="entry name" value="Leu-tRNA-ligase"/>
</dbReference>
<dbReference type="InterPro" id="IPR025709">
    <property type="entry name" value="Leu_tRNA-synth_edit"/>
</dbReference>
<dbReference type="InterPro" id="IPR013155">
    <property type="entry name" value="M/V/L/I-tRNA-synth_anticd-bd"/>
</dbReference>
<dbReference type="InterPro" id="IPR015413">
    <property type="entry name" value="Methionyl/Leucyl_tRNA_Synth"/>
</dbReference>
<dbReference type="InterPro" id="IPR014729">
    <property type="entry name" value="Rossmann-like_a/b/a_fold"/>
</dbReference>
<dbReference type="InterPro" id="IPR009080">
    <property type="entry name" value="tRNAsynth_Ia_anticodon-bd"/>
</dbReference>
<dbReference type="InterPro" id="IPR009008">
    <property type="entry name" value="Val/Leu/Ile-tRNA-synth_edit"/>
</dbReference>
<dbReference type="NCBIfam" id="TIGR00396">
    <property type="entry name" value="leuS_bact"/>
    <property type="match status" value="1"/>
</dbReference>
<dbReference type="PANTHER" id="PTHR43740:SF2">
    <property type="entry name" value="LEUCINE--TRNA LIGASE, MITOCHONDRIAL"/>
    <property type="match status" value="1"/>
</dbReference>
<dbReference type="PANTHER" id="PTHR43740">
    <property type="entry name" value="LEUCYL-TRNA SYNTHETASE"/>
    <property type="match status" value="1"/>
</dbReference>
<dbReference type="Pfam" id="PF08264">
    <property type="entry name" value="Anticodon_1"/>
    <property type="match status" value="1"/>
</dbReference>
<dbReference type="Pfam" id="PF00133">
    <property type="entry name" value="tRNA-synt_1"/>
    <property type="match status" value="1"/>
</dbReference>
<dbReference type="Pfam" id="PF13603">
    <property type="entry name" value="tRNA-synt_1_2"/>
    <property type="match status" value="1"/>
</dbReference>
<dbReference type="Pfam" id="PF09334">
    <property type="entry name" value="tRNA-synt_1g"/>
    <property type="match status" value="1"/>
</dbReference>
<dbReference type="PRINTS" id="PR00985">
    <property type="entry name" value="TRNASYNTHLEU"/>
</dbReference>
<dbReference type="SUPFAM" id="SSF47323">
    <property type="entry name" value="Anticodon-binding domain of a subclass of class I aminoacyl-tRNA synthetases"/>
    <property type="match status" value="1"/>
</dbReference>
<dbReference type="SUPFAM" id="SSF52374">
    <property type="entry name" value="Nucleotidylyl transferase"/>
    <property type="match status" value="1"/>
</dbReference>
<dbReference type="SUPFAM" id="SSF50677">
    <property type="entry name" value="ValRS/IleRS/LeuRS editing domain"/>
    <property type="match status" value="1"/>
</dbReference>
<dbReference type="PROSITE" id="PS00178">
    <property type="entry name" value="AA_TRNA_LIGASE_I"/>
    <property type="match status" value="1"/>
</dbReference>
<name>SYL_LISMH</name>